<evidence type="ECO:0000255" key="1">
    <source>
        <dbReference type="HAMAP-Rule" id="MF_01957"/>
    </source>
</evidence>
<reference key="1">
    <citation type="journal article" date="2005" name="Genome Res.">
        <title>The Chlamydophila abortus genome sequence reveals an array of variable proteins that contribute to interspecies variation.</title>
        <authorList>
            <person name="Thomson N.R."/>
            <person name="Yeats C."/>
            <person name="Bell K."/>
            <person name="Holden M.T.G."/>
            <person name="Bentley S.D."/>
            <person name="Livingstone M."/>
            <person name="Cerdeno-Tarraga A.-M."/>
            <person name="Harris B."/>
            <person name="Doggett J."/>
            <person name="Ormond D."/>
            <person name="Mungall K."/>
            <person name="Clarke K."/>
            <person name="Feltwell T."/>
            <person name="Hance Z."/>
            <person name="Sanders M."/>
            <person name="Quail M.A."/>
            <person name="Price C."/>
            <person name="Barrell B.G."/>
            <person name="Parkhill J."/>
            <person name="Longbottom D."/>
        </authorList>
    </citation>
    <scope>NUCLEOTIDE SEQUENCE [LARGE SCALE GENOMIC DNA]</scope>
    <source>
        <strain>DSM 27085 / S26/3</strain>
    </source>
</reference>
<sequence>MQHYDIIRMIGKGGMGEVYLAYDPICSRKVALKRIREDLSDNELLKKRFLREAKIAADLVHPGVVPVFTICSDSDLVYYTMPYIEGYTLKSLLKSVWQCDSLPKDLAEQTSVGTFLSIFHKICSTIEYVHSRGILHRDLKPDNILLGLFSEVVILDWGAALSKEMKEDVLLDLDIPMPGSMFSNMTVPGKIVGTPDYMAPERLRGAPASESTDIYALGVILYQMLTLSFPYRNKKGKKIHVPNHIISPEEVAPHREIPSFLSQVVMRALATDPKERYTSVQALKADIEQHLQGSPQWTPKIALHTQDAECWKFHESILLSKYFPMLEVSPALWYSLAISKIESFSEVRLEYTLLRKGLEGGFGILLPPSENVDHGDFYRGYGFWLHIKKNVLSVSLVRNGLEIQKTSGNIDVNQEKFFIAFEKQNHRLSLNIDHTVWMIHMDYLPGRGGRIGVIIQDITDVCGNIVVLESSGALHVSCLAVPDAFLNEKLYDRAITFYRRIVESFPGRKEGYEAQFRIGIAVLEKAAEEGDQEGFSQALREFSVLHDSVAAPLEYLGKALVYQRLEEYNEEVKSLLLALKRYGQRPEISRVRDHVVDRLHEALYSNHRVSLVFMLLALHVAPESINSSEEEHFLKNLQGKIHDTLFCSLDISPIDFRSSKMELLLSYWSGFTPFLPGLFQRSWDLKDYRALADIFYTAADLGEREFIDVYGNTLRENIQATTFTEDIVEIFPHQLIHFLSALDAIFLHAPVEKIFSDVDILDPVLIIYLFDLFAKDVLIHGKGEQILDAIQVLETYVSPQQRHTYLLPYEILAYLWMKEGKKVHELLSAHYDESFWIEDSHWAFVLYGYWLALTEESSLAYLHLSGCREDHVAPRALIGLFCSPLGICENQWSYQERRNLLLQKFIFFHCLGDDVERDNCRVAYDLLVKERLL</sequence>
<comment type="function">
    <text evidence="1">Together with the serine/threonine kinase Pkn1, may play a role in the specific interactions with host proteins during intracellular growth.</text>
</comment>
<comment type="catalytic activity">
    <reaction evidence="1">
        <text>L-seryl-[protein] + ATP = O-phospho-L-seryl-[protein] + ADP + H(+)</text>
        <dbReference type="Rhea" id="RHEA:17989"/>
        <dbReference type="Rhea" id="RHEA-COMP:9863"/>
        <dbReference type="Rhea" id="RHEA-COMP:11604"/>
        <dbReference type="ChEBI" id="CHEBI:15378"/>
        <dbReference type="ChEBI" id="CHEBI:29999"/>
        <dbReference type="ChEBI" id="CHEBI:30616"/>
        <dbReference type="ChEBI" id="CHEBI:83421"/>
        <dbReference type="ChEBI" id="CHEBI:456216"/>
        <dbReference type="EC" id="2.7.11.1"/>
    </reaction>
</comment>
<comment type="catalytic activity">
    <reaction evidence="1">
        <text>L-threonyl-[protein] + ATP = O-phospho-L-threonyl-[protein] + ADP + H(+)</text>
        <dbReference type="Rhea" id="RHEA:46608"/>
        <dbReference type="Rhea" id="RHEA-COMP:11060"/>
        <dbReference type="Rhea" id="RHEA-COMP:11605"/>
        <dbReference type="ChEBI" id="CHEBI:15378"/>
        <dbReference type="ChEBI" id="CHEBI:30013"/>
        <dbReference type="ChEBI" id="CHEBI:30616"/>
        <dbReference type="ChEBI" id="CHEBI:61977"/>
        <dbReference type="ChEBI" id="CHEBI:456216"/>
        <dbReference type="EC" id="2.7.11.1"/>
    </reaction>
</comment>
<comment type="PTM">
    <text evidence="1">Autophosphorylated on serine and threonine residues.</text>
</comment>
<comment type="similarity">
    <text evidence="1">Belongs to the protein kinase superfamily. Ser/Thr protein kinase family.</text>
</comment>
<proteinExistence type="inferred from homology"/>
<organism>
    <name type="scientific">Chlamydia abortus (strain DSM 27085 / S26/3)</name>
    <name type="common">Chlamydophila abortus</name>
    <dbReference type="NCBI Taxonomy" id="218497"/>
    <lineage>
        <taxon>Bacteria</taxon>
        <taxon>Pseudomonadati</taxon>
        <taxon>Chlamydiota</taxon>
        <taxon>Chlamydiia</taxon>
        <taxon>Chlamydiales</taxon>
        <taxon>Chlamydiaceae</taxon>
        <taxon>Chlamydia/Chlamydophila group</taxon>
        <taxon>Chlamydia</taxon>
    </lineage>
</organism>
<accession>Q5L5J7</accession>
<gene>
    <name evidence="1" type="primary">pknD</name>
    <name type="ordered locus">CAB647</name>
</gene>
<feature type="chain" id="PRO_0000239300" description="Serine/threonine-protein kinase PknD">
    <location>
        <begin position="1"/>
        <end position="933"/>
    </location>
</feature>
<feature type="domain" description="Protein kinase" evidence="1">
    <location>
        <begin position="4"/>
        <end position="291"/>
    </location>
</feature>
<feature type="active site" description="Proton acceptor" evidence="1">
    <location>
        <position position="138"/>
    </location>
</feature>
<feature type="binding site" evidence="1">
    <location>
        <begin position="10"/>
        <end position="18"/>
    </location>
    <ligand>
        <name>ATP</name>
        <dbReference type="ChEBI" id="CHEBI:30616"/>
    </ligand>
</feature>
<feature type="binding site" evidence="1">
    <location>
        <position position="33"/>
    </location>
    <ligand>
        <name>ATP</name>
        <dbReference type="ChEBI" id="CHEBI:30616"/>
    </ligand>
</feature>
<name>PKND_CHLAB</name>
<keyword id="KW-0067">ATP-binding</keyword>
<keyword id="KW-0418">Kinase</keyword>
<keyword id="KW-0547">Nucleotide-binding</keyword>
<keyword id="KW-0597">Phosphoprotein</keyword>
<keyword id="KW-0723">Serine/threonine-protein kinase</keyword>
<keyword id="KW-0808">Transferase</keyword>
<protein>
    <recommendedName>
        <fullName evidence="1">Serine/threonine-protein kinase PknD</fullName>
        <ecNumber evidence="1">2.7.11.1</ecNumber>
    </recommendedName>
</protein>
<dbReference type="EC" id="2.7.11.1" evidence="1"/>
<dbReference type="EMBL" id="CR848038">
    <property type="protein sequence ID" value="CAH64094.1"/>
    <property type="molecule type" value="Genomic_DNA"/>
</dbReference>
<dbReference type="RefSeq" id="WP_011097231.1">
    <property type="nucleotide sequence ID" value="NC_004552.2"/>
</dbReference>
<dbReference type="SMR" id="Q5L5J7"/>
<dbReference type="KEGG" id="cab:CAB647"/>
<dbReference type="eggNOG" id="COG0515">
    <property type="taxonomic scope" value="Bacteria"/>
</dbReference>
<dbReference type="HOGENOM" id="CLU_303227_0_0_0"/>
<dbReference type="OrthoDB" id="9788659at2"/>
<dbReference type="Proteomes" id="UP000001012">
    <property type="component" value="Chromosome"/>
</dbReference>
<dbReference type="GO" id="GO:0005524">
    <property type="term" value="F:ATP binding"/>
    <property type="evidence" value="ECO:0007669"/>
    <property type="project" value="UniProtKB-KW"/>
</dbReference>
<dbReference type="GO" id="GO:0106310">
    <property type="term" value="F:protein serine kinase activity"/>
    <property type="evidence" value="ECO:0007669"/>
    <property type="project" value="RHEA"/>
</dbReference>
<dbReference type="GO" id="GO:0004674">
    <property type="term" value="F:protein serine/threonine kinase activity"/>
    <property type="evidence" value="ECO:0007669"/>
    <property type="project" value="UniProtKB-UniRule"/>
</dbReference>
<dbReference type="CDD" id="cd14014">
    <property type="entry name" value="STKc_PknB_like"/>
    <property type="match status" value="1"/>
</dbReference>
<dbReference type="Gene3D" id="3.30.200.20">
    <property type="entry name" value="Phosphorylase Kinase, domain 1"/>
    <property type="match status" value="1"/>
</dbReference>
<dbReference type="Gene3D" id="1.25.40.10">
    <property type="entry name" value="Tetratricopeptide repeat domain"/>
    <property type="match status" value="1"/>
</dbReference>
<dbReference type="Gene3D" id="1.10.510.10">
    <property type="entry name" value="Transferase(Phosphotransferase) domain 1"/>
    <property type="match status" value="1"/>
</dbReference>
<dbReference type="HAMAP" id="MF_01957">
    <property type="entry name" value="PknD_kinase"/>
    <property type="match status" value="1"/>
</dbReference>
<dbReference type="InterPro" id="IPR011009">
    <property type="entry name" value="Kinase-like_dom_sf"/>
</dbReference>
<dbReference type="InterPro" id="IPR000719">
    <property type="entry name" value="Prot_kinase_dom"/>
</dbReference>
<dbReference type="InterPro" id="IPR017441">
    <property type="entry name" value="Protein_kinase_ATP_BS"/>
</dbReference>
<dbReference type="InterPro" id="IPR008271">
    <property type="entry name" value="Ser/Thr_kinase_AS"/>
</dbReference>
<dbReference type="InterPro" id="IPR023507">
    <property type="entry name" value="Ser/Thr_kinase_PknD"/>
</dbReference>
<dbReference type="InterPro" id="IPR011990">
    <property type="entry name" value="TPR-like_helical_dom_sf"/>
</dbReference>
<dbReference type="NCBIfam" id="NF009651">
    <property type="entry name" value="PRK13184.1"/>
    <property type="match status" value="1"/>
</dbReference>
<dbReference type="PANTHER" id="PTHR43289">
    <property type="entry name" value="MITOGEN-ACTIVATED PROTEIN KINASE KINASE KINASE 20-RELATED"/>
    <property type="match status" value="1"/>
</dbReference>
<dbReference type="PANTHER" id="PTHR43289:SF34">
    <property type="entry name" value="SERINE_THREONINE-PROTEIN KINASE YBDM-RELATED"/>
    <property type="match status" value="1"/>
</dbReference>
<dbReference type="Pfam" id="PF00069">
    <property type="entry name" value="Pkinase"/>
    <property type="match status" value="1"/>
</dbReference>
<dbReference type="SMART" id="SM00220">
    <property type="entry name" value="S_TKc"/>
    <property type="match status" value="1"/>
</dbReference>
<dbReference type="SUPFAM" id="SSF56112">
    <property type="entry name" value="Protein kinase-like (PK-like)"/>
    <property type="match status" value="1"/>
</dbReference>
<dbReference type="PROSITE" id="PS00107">
    <property type="entry name" value="PROTEIN_KINASE_ATP"/>
    <property type="match status" value="1"/>
</dbReference>
<dbReference type="PROSITE" id="PS50011">
    <property type="entry name" value="PROTEIN_KINASE_DOM"/>
    <property type="match status" value="1"/>
</dbReference>
<dbReference type="PROSITE" id="PS00108">
    <property type="entry name" value="PROTEIN_KINASE_ST"/>
    <property type="match status" value="1"/>
</dbReference>